<name>GPR85_DANRE</name>
<comment type="function">
    <text>Orphan receptor.</text>
</comment>
<comment type="subcellular location">
    <subcellularLocation>
        <location evidence="1">Cell membrane</location>
        <topology evidence="1">Multi-pass membrane protein</topology>
    </subcellularLocation>
</comment>
<comment type="similarity">
    <text evidence="3">Belongs to the G-protein coupled receptor 1 family.</text>
</comment>
<comment type="sequence caution" evidence="4">
    <conflict type="erroneous initiation">
        <sequence resource="EMBL-CDS" id="CAK05473"/>
    </conflict>
    <text>Extended N-terminus.</text>
</comment>
<comment type="sequence caution" evidence="4">
    <conflict type="erroneous initiation">
        <sequence resource="EMBL-CDS" id="CAQ14025"/>
    </conflict>
    <text>Extended N-terminus.</text>
</comment>
<keyword id="KW-1003">Cell membrane</keyword>
<keyword id="KW-1015">Disulfide bond</keyword>
<keyword id="KW-0297">G-protein coupled receptor</keyword>
<keyword id="KW-0325">Glycoprotein</keyword>
<keyword id="KW-0472">Membrane</keyword>
<keyword id="KW-0675">Receptor</keyword>
<keyword id="KW-1185">Reference proteome</keyword>
<keyword id="KW-0807">Transducer</keyword>
<keyword id="KW-0812">Transmembrane</keyword>
<keyword id="KW-1133">Transmembrane helix</keyword>
<gene>
    <name type="primary">gpr85</name>
    <name type="synonym">sreb2</name>
    <name type="ORF">si:dkey-223l3.1</name>
</gene>
<organism>
    <name type="scientific">Danio rerio</name>
    <name type="common">Zebrafish</name>
    <name type="synonym">Brachydanio rerio</name>
    <dbReference type="NCBI Taxonomy" id="7955"/>
    <lineage>
        <taxon>Eukaryota</taxon>
        <taxon>Metazoa</taxon>
        <taxon>Chordata</taxon>
        <taxon>Craniata</taxon>
        <taxon>Vertebrata</taxon>
        <taxon>Euteleostomi</taxon>
        <taxon>Actinopterygii</taxon>
        <taxon>Neopterygii</taxon>
        <taxon>Teleostei</taxon>
        <taxon>Ostariophysi</taxon>
        <taxon>Cypriniformes</taxon>
        <taxon>Danionidae</taxon>
        <taxon>Danioninae</taxon>
        <taxon>Danio</taxon>
    </lineage>
</organism>
<dbReference type="EMBL" id="AB040805">
    <property type="protein sequence ID" value="BAA96651.1"/>
    <property type="molecule type" value="Genomic_DNA"/>
</dbReference>
<dbReference type="EMBL" id="CR388075">
    <property type="protein sequence ID" value="CAK05473.1"/>
    <property type="status" value="ALT_INIT"/>
    <property type="molecule type" value="Genomic_DNA"/>
</dbReference>
<dbReference type="EMBL" id="CT583719">
    <property type="protein sequence ID" value="CAQ14025.1"/>
    <property type="status" value="ALT_INIT"/>
    <property type="molecule type" value="Genomic_DNA"/>
</dbReference>
<dbReference type="EMBL" id="BC054645">
    <property type="protein sequence ID" value="AAH54645.1"/>
    <property type="molecule type" value="mRNA"/>
</dbReference>
<dbReference type="EMBL" id="EF033027">
    <property type="protein sequence ID" value="ABM22392.1"/>
    <property type="molecule type" value="Genomic_DNA"/>
</dbReference>
<dbReference type="RefSeq" id="NP_571574.1">
    <property type="nucleotide sequence ID" value="NM_131499.2"/>
</dbReference>
<dbReference type="SMR" id="Q9I919"/>
<dbReference type="FunCoup" id="Q9I919">
    <property type="interactions" value="921"/>
</dbReference>
<dbReference type="STRING" id="7955.ENSDARP00000090236"/>
<dbReference type="GlyCosmos" id="Q9I919">
    <property type="glycosylation" value="3 sites, No reported glycans"/>
</dbReference>
<dbReference type="PaxDb" id="7955-ENSDARP00000090236"/>
<dbReference type="GeneID" id="793299"/>
<dbReference type="KEGG" id="dre:793299"/>
<dbReference type="AGR" id="ZFIN:ZDB-GENE-000710-2"/>
<dbReference type="CTD" id="54329"/>
<dbReference type="ZFIN" id="ZDB-GENE-000710-2">
    <property type="gene designation" value="gpr85"/>
</dbReference>
<dbReference type="eggNOG" id="KOG3656">
    <property type="taxonomic scope" value="Eukaryota"/>
</dbReference>
<dbReference type="InParanoid" id="Q9I919"/>
<dbReference type="OrthoDB" id="6129346at2759"/>
<dbReference type="PhylomeDB" id="Q9I919"/>
<dbReference type="TreeFam" id="TF331163"/>
<dbReference type="PRO" id="PR:Q9I919"/>
<dbReference type="Proteomes" id="UP000000437">
    <property type="component" value="Alternate scaffold 4"/>
</dbReference>
<dbReference type="Proteomes" id="UP000000437">
    <property type="component" value="Chromosome 4"/>
</dbReference>
<dbReference type="GO" id="GO:0005886">
    <property type="term" value="C:plasma membrane"/>
    <property type="evidence" value="ECO:0000318"/>
    <property type="project" value="GO_Central"/>
</dbReference>
<dbReference type="GO" id="GO:0004930">
    <property type="term" value="F:G protein-coupled receptor activity"/>
    <property type="evidence" value="ECO:0000318"/>
    <property type="project" value="GO_Central"/>
</dbReference>
<dbReference type="FunFam" id="1.20.1070.10:FF:000074">
    <property type="entry name" value="probable G-protein coupled receptor 173"/>
    <property type="match status" value="1"/>
</dbReference>
<dbReference type="Gene3D" id="1.20.1070.10">
    <property type="entry name" value="Rhodopsin 7-helix transmembrane proteins"/>
    <property type="match status" value="1"/>
</dbReference>
<dbReference type="InterPro" id="IPR051509">
    <property type="entry name" value="GPCR_Orphan/Phoenixin"/>
</dbReference>
<dbReference type="InterPro" id="IPR000276">
    <property type="entry name" value="GPCR_Rhodpsn"/>
</dbReference>
<dbReference type="InterPro" id="IPR017452">
    <property type="entry name" value="GPCR_Rhodpsn_7TM"/>
</dbReference>
<dbReference type="PANTHER" id="PTHR19268">
    <property type="entry name" value="G PROTEIN-COUPLED RECEPTOR"/>
    <property type="match status" value="1"/>
</dbReference>
<dbReference type="PANTHER" id="PTHR19268:SF7">
    <property type="entry name" value="G-PROTEIN COUPLED RECEPTOR 85-RELATED"/>
    <property type="match status" value="1"/>
</dbReference>
<dbReference type="Pfam" id="PF00001">
    <property type="entry name" value="7tm_1"/>
    <property type="match status" value="1"/>
</dbReference>
<dbReference type="PRINTS" id="PR00237">
    <property type="entry name" value="GPCRRHODOPSN"/>
</dbReference>
<dbReference type="SUPFAM" id="SSF81321">
    <property type="entry name" value="Family A G protein-coupled receptor-like"/>
    <property type="match status" value="1"/>
</dbReference>
<dbReference type="PROSITE" id="PS50262">
    <property type="entry name" value="G_PROTEIN_RECEP_F1_2"/>
    <property type="match status" value="1"/>
</dbReference>
<sequence>MANYSHAGDHNILQNVSPLATFLKLTSLGFIIGVGVVGNLLISILLVKDKSLHRAPYYFLLDLCASDILRSAICFPFVFTSVKNGSAWTYGTLTCKVIAFLGVLSCFHTAFMLFCVSVTRYLAIAHHRFYTKRLTFWTCLAVICMVWTLSVAMAFPPVLDVGTYSFIREEDQCTFQHRSFRANDSLGFMLLLALILLATQLVYLKLIFFVHDRRKMKPVQFVPAVSQNWTFHGPGASGQAAANWLAGFGRGPTPPTLLGIRQNSNAAGRRRLLVLDEFKTEKRISRMFYIITFFFLSLWGPYLVACYWRVFARGPVIPGGYLTAAVWMSFAQAGVNPFICIFSNRELRRCFSTTLLYCRKSRLPREPYCVI</sequence>
<reference key="1">
    <citation type="journal article" date="2000" name="Biochem. Biophys. Res. Commun.">
        <title>An evolutionarily conserved G-protein coupled receptor family, SREB, expressed in the central nervous system.</title>
        <authorList>
            <person name="Matsumoto M."/>
            <person name="Saito T."/>
            <person name="Takasaki J."/>
            <person name="Kamohara M."/>
            <person name="Sugimoto T."/>
            <person name="Kobayashi M."/>
            <person name="Tadokoro M."/>
            <person name="Matsumoto S."/>
            <person name="Ohishi T."/>
            <person name="Furuichi K."/>
        </authorList>
    </citation>
    <scope>NUCLEOTIDE SEQUENCE [GENOMIC DNA]</scope>
</reference>
<reference key="2">
    <citation type="journal article" date="2013" name="Nature">
        <title>The zebrafish reference genome sequence and its relationship to the human genome.</title>
        <authorList>
            <person name="Howe K."/>
            <person name="Clark M.D."/>
            <person name="Torroja C.F."/>
            <person name="Torrance J."/>
            <person name="Berthelot C."/>
            <person name="Muffato M."/>
            <person name="Collins J.E."/>
            <person name="Humphray S."/>
            <person name="McLaren K."/>
            <person name="Matthews L."/>
            <person name="McLaren S."/>
            <person name="Sealy I."/>
            <person name="Caccamo M."/>
            <person name="Churcher C."/>
            <person name="Scott C."/>
            <person name="Barrett J.C."/>
            <person name="Koch R."/>
            <person name="Rauch G.J."/>
            <person name="White S."/>
            <person name="Chow W."/>
            <person name="Kilian B."/>
            <person name="Quintais L.T."/>
            <person name="Guerra-Assuncao J.A."/>
            <person name="Zhou Y."/>
            <person name="Gu Y."/>
            <person name="Yen J."/>
            <person name="Vogel J.H."/>
            <person name="Eyre T."/>
            <person name="Redmond S."/>
            <person name="Banerjee R."/>
            <person name="Chi J."/>
            <person name="Fu B."/>
            <person name="Langley E."/>
            <person name="Maguire S.F."/>
            <person name="Laird G.K."/>
            <person name="Lloyd D."/>
            <person name="Kenyon E."/>
            <person name="Donaldson S."/>
            <person name="Sehra H."/>
            <person name="Almeida-King J."/>
            <person name="Loveland J."/>
            <person name="Trevanion S."/>
            <person name="Jones M."/>
            <person name="Quail M."/>
            <person name="Willey D."/>
            <person name="Hunt A."/>
            <person name="Burton J."/>
            <person name="Sims S."/>
            <person name="McLay K."/>
            <person name="Plumb B."/>
            <person name="Davis J."/>
            <person name="Clee C."/>
            <person name="Oliver K."/>
            <person name="Clark R."/>
            <person name="Riddle C."/>
            <person name="Elliot D."/>
            <person name="Threadgold G."/>
            <person name="Harden G."/>
            <person name="Ware D."/>
            <person name="Begum S."/>
            <person name="Mortimore B."/>
            <person name="Kerry G."/>
            <person name="Heath P."/>
            <person name="Phillimore B."/>
            <person name="Tracey A."/>
            <person name="Corby N."/>
            <person name="Dunn M."/>
            <person name="Johnson C."/>
            <person name="Wood J."/>
            <person name="Clark S."/>
            <person name="Pelan S."/>
            <person name="Griffiths G."/>
            <person name="Smith M."/>
            <person name="Glithero R."/>
            <person name="Howden P."/>
            <person name="Barker N."/>
            <person name="Lloyd C."/>
            <person name="Stevens C."/>
            <person name="Harley J."/>
            <person name="Holt K."/>
            <person name="Panagiotidis G."/>
            <person name="Lovell J."/>
            <person name="Beasley H."/>
            <person name="Henderson C."/>
            <person name="Gordon D."/>
            <person name="Auger K."/>
            <person name="Wright D."/>
            <person name="Collins J."/>
            <person name="Raisen C."/>
            <person name="Dyer L."/>
            <person name="Leung K."/>
            <person name="Robertson L."/>
            <person name="Ambridge K."/>
            <person name="Leongamornlert D."/>
            <person name="McGuire S."/>
            <person name="Gilderthorp R."/>
            <person name="Griffiths C."/>
            <person name="Manthravadi D."/>
            <person name="Nichol S."/>
            <person name="Barker G."/>
            <person name="Whitehead S."/>
            <person name="Kay M."/>
            <person name="Brown J."/>
            <person name="Murnane C."/>
            <person name="Gray E."/>
            <person name="Humphries M."/>
            <person name="Sycamore N."/>
            <person name="Barker D."/>
            <person name="Saunders D."/>
            <person name="Wallis J."/>
            <person name="Babbage A."/>
            <person name="Hammond S."/>
            <person name="Mashreghi-Mohammadi M."/>
            <person name="Barr L."/>
            <person name="Martin S."/>
            <person name="Wray P."/>
            <person name="Ellington A."/>
            <person name="Matthews N."/>
            <person name="Ellwood M."/>
            <person name="Woodmansey R."/>
            <person name="Clark G."/>
            <person name="Cooper J."/>
            <person name="Tromans A."/>
            <person name="Grafham D."/>
            <person name="Skuce C."/>
            <person name="Pandian R."/>
            <person name="Andrews R."/>
            <person name="Harrison E."/>
            <person name="Kimberley A."/>
            <person name="Garnett J."/>
            <person name="Fosker N."/>
            <person name="Hall R."/>
            <person name="Garner P."/>
            <person name="Kelly D."/>
            <person name="Bird C."/>
            <person name="Palmer S."/>
            <person name="Gehring I."/>
            <person name="Berger A."/>
            <person name="Dooley C.M."/>
            <person name="Ersan-Urun Z."/>
            <person name="Eser C."/>
            <person name="Geiger H."/>
            <person name="Geisler M."/>
            <person name="Karotki L."/>
            <person name="Kirn A."/>
            <person name="Konantz J."/>
            <person name="Konantz M."/>
            <person name="Oberlander M."/>
            <person name="Rudolph-Geiger S."/>
            <person name="Teucke M."/>
            <person name="Lanz C."/>
            <person name="Raddatz G."/>
            <person name="Osoegawa K."/>
            <person name="Zhu B."/>
            <person name="Rapp A."/>
            <person name="Widaa S."/>
            <person name="Langford C."/>
            <person name="Yang F."/>
            <person name="Schuster S.C."/>
            <person name="Carter N.P."/>
            <person name="Harrow J."/>
            <person name="Ning Z."/>
            <person name="Herrero J."/>
            <person name="Searle S.M."/>
            <person name="Enright A."/>
            <person name="Geisler R."/>
            <person name="Plasterk R.H."/>
            <person name="Lee C."/>
            <person name="Westerfield M."/>
            <person name="de Jong P.J."/>
            <person name="Zon L.I."/>
            <person name="Postlethwait J.H."/>
            <person name="Nusslein-Volhard C."/>
            <person name="Hubbard T.J."/>
            <person name="Roest Crollius H."/>
            <person name="Rogers J."/>
            <person name="Stemple D.L."/>
        </authorList>
    </citation>
    <scope>NUCLEOTIDE SEQUENCE [LARGE SCALE GENOMIC DNA]</scope>
    <source>
        <strain>Tuebingen</strain>
    </source>
</reference>
<reference key="3">
    <citation type="submission" date="2003-07" db="EMBL/GenBank/DDBJ databases">
        <authorList>
            <consortium name="NIH - Zebrafish Gene Collection (ZGC) project"/>
        </authorList>
    </citation>
    <scope>NUCLEOTIDE SEQUENCE [LARGE SCALE MRNA]</scope>
    <source>
        <tissue>Embryo</tissue>
    </source>
</reference>
<reference key="4">
    <citation type="journal article" date="2007" name="BMC Evol. Biol.">
        <title>A practical approach to phylogenomics: the phylogeny of ray-finned fish (Actinopterygii) as a case study.</title>
        <authorList>
            <person name="Li C."/>
            <person name="Orti G."/>
            <person name="Zhang G."/>
            <person name="Lu G."/>
        </authorList>
    </citation>
    <scope>NUCLEOTIDE SEQUENCE [GENOMIC DNA] OF 18-346</scope>
</reference>
<feature type="chain" id="PRO_0000069594" description="Probable G protein-coupled receptor 85">
    <location>
        <begin position="1"/>
        <end position="371"/>
    </location>
</feature>
<feature type="topological domain" description="Extracellular" evidence="2">
    <location>
        <begin position="1"/>
        <end position="26"/>
    </location>
</feature>
<feature type="transmembrane region" description="Helical; Name=1" evidence="2">
    <location>
        <begin position="27"/>
        <end position="47"/>
    </location>
</feature>
<feature type="topological domain" description="Cytoplasmic" evidence="2">
    <location>
        <begin position="48"/>
        <end position="58"/>
    </location>
</feature>
<feature type="transmembrane region" description="Helical; Name=2" evidence="2">
    <location>
        <begin position="59"/>
        <end position="79"/>
    </location>
</feature>
<feature type="topological domain" description="Extracellular" evidence="2">
    <location>
        <begin position="80"/>
        <end position="96"/>
    </location>
</feature>
<feature type="transmembrane region" description="Helical; Name=3" evidence="2">
    <location>
        <begin position="97"/>
        <end position="117"/>
    </location>
</feature>
<feature type="topological domain" description="Cytoplasmic" evidence="2">
    <location>
        <begin position="118"/>
        <end position="138"/>
    </location>
</feature>
<feature type="transmembrane region" description="Helical; Name=4" evidence="2">
    <location>
        <begin position="139"/>
        <end position="159"/>
    </location>
</feature>
<feature type="topological domain" description="Extracellular" evidence="2">
    <location>
        <begin position="160"/>
        <end position="189"/>
    </location>
</feature>
<feature type="transmembrane region" description="Helical; Name=5" evidence="2">
    <location>
        <begin position="190"/>
        <end position="210"/>
    </location>
</feature>
<feature type="topological domain" description="Cytoplasmic" evidence="2">
    <location>
        <begin position="211"/>
        <end position="287"/>
    </location>
</feature>
<feature type="transmembrane region" description="Helical; Name=6" evidence="2">
    <location>
        <begin position="288"/>
        <end position="308"/>
    </location>
</feature>
<feature type="topological domain" description="Extracellular" evidence="2">
    <location>
        <begin position="309"/>
        <end position="321"/>
    </location>
</feature>
<feature type="transmembrane region" description="Helical; Name=7" evidence="2">
    <location>
        <begin position="322"/>
        <end position="342"/>
    </location>
</feature>
<feature type="topological domain" description="Cytoplasmic" evidence="2">
    <location>
        <begin position="343"/>
        <end position="371"/>
    </location>
</feature>
<feature type="glycosylation site" description="N-linked (GlcNAc...) asparagine" evidence="2">
    <location>
        <position position="3"/>
    </location>
</feature>
<feature type="glycosylation site" description="N-linked (GlcNAc...) asparagine" evidence="2">
    <location>
        <position position="84"/>
    </location>
</feature>
<feature type="glycosylation site" description="N-linked (GlcNAc...) asparagine" evidence="2">
    <location>
        <position position="183"/>
    </location>
</feature>
<feature type="disulfide bond" evidence="3">
    <location>
        <begin position="95"/>
        <end position="173"/>
    </location>
</feature>
<feature type="sequence conflict" description="In Ref. 3; ABM22392." evidence="4" ref="3">
    <original>F</original>
    <variation>L</variation>
    <location>
        <position position="288"/>
    </location>
</feature>
<evidence type="ECO:0000250" key="1"/>
<evidence type="ECO:0000255" key="2"/>
<evidence type="ECO:0000255" key="3">
    <source>
        <dbReference type="PROSITE-ProRule" id="PRU00521"/>
    </source>
</evidence>
<evidence type="ECO:0000305" key="4"/>
<proteinExistence type="evidence at transcript level"/>
<accession>Q9I919</accession>
<accession>A4KUT3</accession>
<accession>Q1L937</accession>
<protein>
    <recommendedName>
        <fullName>Probable G protein-coupled receptor 85</fullName>
    </recommendedName>
    <alternativeName>
        <fullName>Super conserved receptor expressed in brain 2</fullName>
        <shortName>zSREB2</shortName>
    </alternativeName>
</protein>